<name>YEJL_SHIB3</name>
<gene>
    <name evidence="1" type="primary">yejL</name>
    <name type="ordered locus">SbBS512_E0770</name>
</gene>
<reference key="1">
    <citation type="submission" date="2008-05" db="EMBL/GenBank/DDBJ databases">
        <title>Complete sequence of Shigella boydii serotype 18 strain BS512.</title>
        <authorList>
            <person name="Rasko D.A."/>
            <person name="Rosovitz M."/>
            <person name="Maurelli A.T."/>
            <person name="Myers G."/>
            <person name="Seshadri R."/>
            <person name="Cer R."/>
            <person name="Jiang L."/>
            <person name="Ravel J."/>
            <person name="Sebastian Y."/>
        </authorList>
    </citation>
    <scope>NUCLEOTIDE SEQUENCE [LARGE SCALE GENOMIC DNA]</scope>
    <source>
        <strain>CDC 3083-94 / BS512</strain>
    </source>
</reference>
<organism>
    <name type="scientific">Shigella boydii serotype 18 (strain CDC 3083-94 / BS512)</name>
    <dbReference type="NCBI Taxonomy" id="344609"/>
    <lineage>
        <taxon>Bacteria</taxon>
        <taxon>Pseudomonadati</taxon>
        <taxon>Pseudomonadota</taxon>
        <taxon>Gammaproteobacteria</taxon>
        <taxon>Enterobacterales</taxon>
        <taxon>Enterobacteriaceae</taxon>
        <taxon>Shigella</taxon>
    </lineage>
</organism>
<accession>B2TV60</accession>
<evidence type="ECO:0000255" key="1">
    <source>
        <dbReference type="HAMAP-Rule" id="MF_00816"/>
    </source>
</evidence>
<sequence>MPQISRYSDEQVEQLLAELLNVLEKHKAPTDLSLMVLGNMVTNLINTSIAPAQRQAIANSFARALQSSINEDKAH</sequence>
<proteinExistence type="inferred from homology"/>
<dbReference type="EMBL" id="CP001063">
    <property type="protein sequence ID" value="ACD10298.1"/>
    <property type="molecule type" value="Genomic_DNA"/>
</dbReference>
<dbReference type="RefSeq" id="WP_001135667.1">
    <property type="nucleotide sequence ID" value="NC_010658.1"/>
</dbReference>
<dbReference type="SMR" id="B2TV60"/>
<dbReference type="STRING" id="344609.SbBS512_E0770"/>
<dbReference type="KEGG" id="sbc:SbBS512_E0770"/>
<dbReference type="HOGENOM" id="CLU_175457_0_0_6"/>
<dbReference type="Proteomes" id="UP000001030">
    <property type="component" value="Chromosome"/>
</dbReference>
<dbReference type="FunFam" id="1.10.3390.10:FF:000001">
    <property type="entry name" value="UPF0352 protein YejL"/>
    <property type="match status" value="1"/>
</dbReference>
<dbReference type="Gene3D" id="1.10.3390.10">
    <property type="entry name" value="YejL-like"/>
    <property type="match status" value="1"/>
</dbReference>
<dbReference type="HAMAP" id="MF_00816">
    <property type="entry name" value="UPF0352"/>
    <property type="match status" value="1"/>
</dbReference>
<dbReference type="InterPro" id="IPR009857">
    <property type="entry name" value="UPF0352"/>
</dbReference>
<dbReference type="InterPro" id="IPR023202">
    <property type="entry name" value="YejL_sf"/>
</dbReference>
<dbReference type="NCBIfam" id="NF010242">
    <property type="entry name" value="PRK13689.1"/>
    <property type="match status" value="1"/>
</dbReference>
<dbReference type="Pfam" id="PF07208">
    <property type="entry name" value="DUF1414"/>
    <property type="match status" value="1"/>
</dbReference>
<dbReference type="PIRSF" id="PIRSF006188">
    <property type="entry name" value="UCP006188"/>
    <property type="match status" value="1"/>
</dbReference>
<dbReference type="SUPFAM" id="SSF158651">
    <property type="entry name" value="YejL-like"/>
    <property type="match status" value="1"/>
</dbReference>
<protein>
    <recommendedName>
        <fullName evidence="1">UPF0352 protein YejL</fullName>
    </recommendedName>
</protein>
<feature type="chain" id="PRO_1000199603" description="UPF0352 protein YejL">
    <location>
        <begin position="1"/>
        <end position="75"/>
    </location>
</feature>
<keyword id="KW-1185">Reference proteome</keyword>
<comment type="similarity">
    <text evidence="1">Belongs to the UPF0352 family.</text>
</comment>